<proteinExistence type="inferred from homology"/>
<comment type="function">
    <text evidence="3">Ribonuclease which shows a preference for the pyrimidines uridine and cytosine. Has potent antibacterial activity against a range of Gram-positive and Gram-negative bacteria, including P.aeruginosa, A.baumanii, M.luteus, S.aureus, E.faecalis, E.faecium, S.saprophyticus and E.coli. Causes loss of bacterial membrane integrity, and also promotes agglutination of Gram-negative bacteria. Probably contributes to urinary tract sterility. Bactericidal activity is independent of RNase activity.</text>
</comment>
<comment type="subunit">
    <text evidence="3">Interacts (via N-terminus) with bacterial lipopolysaccharide (LPS).</text>
</comment>
<comment type="subcellular location">
    <subcellularLocation>
        <location evidence="3">Secreted</location>
    </subcellularLocation>
    <subcellularLocation>
        <location evidence="3">Lysosome</location>
    </subcellularLocation>
    <subcellularLocation>
        <location evidence="3">Cytoplasmic granule</location>
    </subcellularLocation>
</comment>
<comment type="similarity">
    <text evidence="6">Belongs to the pancreatic ribonuclease family.</text>
</comment>
<sequence length="150" mass="17178">MVLCFPLLLLLLVLWGPVCLLHAWPKHLTRAHWFEIQHIQPSPLQCNRAMSGINNYTQHCKHQNTFLHDSFQNVAAVCDLLSIICKNRQHNCHQSSKPVNMTDCRLTSGKYPQCRYSAAGLYKFFIVACDPPQKSDPPYKLVPVHLDSIL</sequence>
<accession>O46534</accession>
<gene>
    <name type="primary">RNASE6</name>
</gene>
<feature type="signal peptide" evidence="1">
    <location>
        <begin position="1"/>
        <end position="23"/>
    </location>
</feature>
<feature type="chain" id="PRO_0000030890" description="Ribonuclease K6">
    <location>
        <begin position="24"/>
        <end position="150"/>
    </location>
</feature>
<feature type="active site" description="Proton acceptor" evidence="2">
    <location>
        <position position="38"/>
    </location>
</feature>
<feature type="active site" description="Proton donor" evidence="2">
    <location>
        <position position="145"/>
    </location>
</feature>
<feature type="binding site" evidence="1">
    <location>
        <begin position="61"/>
        <end position="65"/>
    </location>
    <ligand>
        <name>substrate</name>
    </ligand>
</feature>
<feature type="binding site" evidence="1">
    <location>
        <position position="86"/>
    </location>
    <ligand>
        <name>substrate</name>
    </ligand>
</feature>
<feature type="binding site" evidence="1">
    <location>
        <position position="105"/>
    </location>
    <ligand>
        <name>substrate</name>
    </ligand>
</feature>
<feature type="site" description="Facilitates cleavage of polynucleotide substrates" evidence="3">
    <location>
        <position position="59"/>
    </location>
</feature>
<feature type="site" description="Critical for catalytic activity" evidence="4">
    <location>
        <position position="61"/>
    </location>
</feature>
<feature type="glycosylation site" description="N-linked (GlcNAc...) asparagine" evidence="5">
    <location>
        <position position="55"/>
    </location>
</feature>
<feature type="glycosylation site" description="N-linked (GlcNAc...) asparagine" evidence="5">
    <location>
        <position position="100"/>
    </location>
</feature>
<feature type="disulfide bond" evidence="3">
    <location>
        <begin position="46"/>
        <end position="104"/>
    </location>
</feature>
<feature type="disulfide bond" evidence="3">
    <location>
        <begin position="60"/>
        <end position="114"/>
    </location>
</feature>
<feature type="disulfide bond" evidence="3">
    <location>
        <begin position="78"/>
        <end position="129"/>
    </location>
</feature>
<feature type="disulfide bond" evidence="3">
    <location>
        <begin position="85"/>
        <end position="92"/>
    </location>
</feature>
<organism>
    <name type="scientific">Chlorocebus aethiops</name>
    <name type="common">Green monkey</name>
    <name type="synonym">Cercopithecus aethiops</name>
    <dbReference type="NCBI Taxonomy" id="9534"/>
    <lineage>
        <taxon>Eukaryota</taxon>
        <taxon>Metazoa</taxon>
        <taxon>Chordata</taxon>
        <taxon>Craniata</taxon>
        <taxon>Vertebrata</taxon>
        <taxon>Euteleostomi</taxon>
        <taxon>Mammalia</taxon>
        <taxon>Eutheria</taxon>
        <taxon>Euarchontoglires</taxon>
        <taxon>Primates</taxon>
        <taxon>Haplorrhini</taxon>
        <taxon>Catarrhini</taxon>
        <taxon>Cercopithecidae</taxon>
        <taxon>Cercopithecinae</taxon>
        <taxon>Chlorocebus</taxon>
    </lineage>
</organism>
<reference key="1">
    <citation type="journal article" date="1998" name="Genome Res.">
        <title>Ribonuclease k6: chromosomal mapping and divergent rates of evolution within the RNase A gene superfamily.</title>
        <authorList>
            <person name="Deming M.S."/>
            <person name="Dyer K.D."/>
            <person name="Bankier A.T."/>
            <person name="Piper M.B."/>
            <person name="Dear P.H."/>
            <person name="Rosenberg H.F."/>
        </authorList>
    </citation>
    <scope>NUCLEOTIDE SEQUENCE [GENOMIC DNA]</scope>
</reference>
<dbReference type="EC" id="3.1.27.-"/>
<dbReference type="EMBL" id="AF037090">
    <property type="protein sequence ID" value="AAB94752.1"/>
    <property type="molecule type" value="Genomic_DNA"/>
</dbReference>
<dbReference type="SMR" id="O46534"/>
<dbReference type="GlyCosmos" id="O46534">
    <property type="glycosylation" value="2 sites, No reported glycans"/>
</dbReference>
<dbReference type="GO" id="GO:0005615">
    <property type="term" value="C:extracellular space"/>
    <property type="evidence" value="ECO:0007669"/>
    <property type="project" value="TreeGrafter"/>
</dbReference>
<dbReference type="GO" id="GO:0005764">
    <property type="term" value="C:lysosome"/>
    <property type="evidence" value="ECO:0007669"/>
    <property type="project" value="UniProtKB-SubCell"/>
</dbReference>
<dbReference type="GO" id="GO:0004519">
    <property type="term" value="F:endonuclease activity"/>
    <property type="evidence" value="ECO:0007669"/>
    <property type="project" value="UniProtKB-KW"/>
</dbReference>
<dbReference type="GO" id="GO:0003676">
    <property type="term" value="F:nucleic acid binding"/>
    <property type="evidence" value="ECO:0007669"/>
    <property type="project" value="InterPro"/>
</dbReference>
<dbReference type="GO" id="GO:0004540">
    <property type="term" value="F:RNA nuclease activity"/>
    <property type="evidence" value="ECO:0007669"/>
    <property type="project" value="TreeGrafter"/>
</dbReference>
<dbReference type="GO" id="GO:0019731">
    <property type="term" value="P:antibacterial humoral response"/>
    <property type="evidence" value="ECO:0007669"/>
    <property type="project" value="TreeGrafter"/>
</dbReference>
<dbReference type="GO" id="GO:0061844">
    <property type="term" value="P:antimicrobial humoral immune response mediated by antimicrobial peptide"/>
    <property type="evidence" value="ECO:0007669"/>
    <property type="project" value="TreeGrafter"/>
</dbReference>
<dbReference type="GO" id="GO:0050829">
    <property type="term" value="P:defense response to Gram-negative bacterium"/>
    <property type="evidence" value="ECO:0007669"/>
    <property type="project" value="TreeGrafter"/>
</dbReference>
<dbReference type="GO" id="GO:0050830">
    <property type="term" value="P:defense response to Gram-positive bacterium"/>
    <property type="evidence" value="ECO:0007669"/>
    <property type="project" value="TreeGrafter"/>
</dbReference>
<dbReference type="GO" id="GO:0045087">
    <property type="term" value="P:innate immune response"/>
    <property type="evidence" value="ECO:0007669"/>
    <property type="project" value="TreeGrafter"/>
</dbReference>
<dbReference type="CDD" id="cd06265">
    <property type="entry name" value="RNase_A_canonical"/>
    <property type="match status" value="1"/>
</dbReference>
<dbReference type="FunFam" id="3.10.130.10:FF:000001">
    <property type="entry name" value="Ribonuclease pancreatic"/>
    <property type="match status" value="1"/>
</dbReference>
<dbReference type="Gene3D" id="3.10.130.10">
    <property type="entry name" value="Ribonuclease A-like domain"/>
    <property type="match status" value="1"/>
</dbReference>
<dbReference type="InterPro" id="IPR001427">
    <property type="entry name" value="RNaseA"/>
</dbReference>
<dbReference type="InterPro" id="IPR036816">
    <property type="entry name" value="RNaseA-like_dom_sf"/>
</dbReference>
<dbReference type="InterPro" id="IPR023411">
    <property type="entry name" value="RNaseA_AS"/>
</dbReference>
<dbReference type="InterPro" id="IPR023412">
    <property type="entry name" value="RNaseA_domain"/>
</dbReference>
<dbReference type="PANTHER" id="PTHR11437">
    <property type="entry name" value="RIBONUCLEASE"/>
    <property type="match status" value="1"/>
</dbReference>
<dbReference type="PANTHER" id="PTHR11437:SF4">
    <property type="entry name" value="RIBONUCLEASE K6"/>
    <property type="match status" value="1"/>
</dbReference>
<dbReference type="Pfam" id="PF00074">
    <property type="entry name" value="RnaseA"/>
    <property type="match status" value="1"/>
</dbReference>
<dbReference type="PRINTS" id="PR00794">
    <property type="entry name" value="RIBONUCLEASE"/>
</dbReference>
<dbReference type="SMART" id="SM00092">
    <property type="entry name" value="RNAse_Pc"/>
    <property type="match status" value="1"/>
</dbReference>
<dbReference type="SUPFAM" id="SSF54076">
    <property type="entry name" value="RNase A-like"/>
    <property type="match status" value="1"/>
</dbReference>
<dbReference type="PROSITE" id="PS00127">
    <property type="entry name" value="RNASE_PANCREATIC"/>
    <property type="match status" value="1"/>
</dbReference>
<evidence type="ECO:0000250" key="1"/>
<evidence type="ECO:0000250" key="2">
    <source>
        <dbReference type="UniProtKB" id="Q64438"/>
    </source>
</evidence>
<evidence type="ECO:0000250" key="3">
    <source>
        <dbReference type="UniProtKB" id="Q93091"/>
    </source>
</evidence>
<evidence type="ECO:0000250" key="4">
    <source>
        <dbReference type="UniProtKB" id="Q9H1E1"/>
    </source>
</evidence>
<evidence type="ECO:0000255" key="5"/>
<evidence type="ECO:0000305" key="6"/>
<keyword id="KW-0044">Antibiotic</keyword>
<keyword id="KW-0929">Antimicrobial</keyword>
<keyword id="KW-1015">Disulfide bond</keyword>
<keyword id="KW-0255">Endonuclease</keyword>
<keyword id="KW-0325">Glycoprotein</keyword>
<keyword id="KW-0378">Hydrolase</keyword>
<keyword id="KW-0458">Lysosome</keyword>
<keyword id="KW-0540">Nuclease</keyword>
<keyword id="KW-0964">Secreted</keyword>
<keyword id="KW-0732">Signal</keyword>
<name>RNAS6_CHLAE</name>
<protein>
    <recommendedName>
        <fullName>Ribonuclease K6</fullName>
        <shortName>RNase K6</shortName>
        <ecNumber>3.1.27.-</ecNumber>
    </recommendedName>
</protein>